<sequence length="503" mass="56141">MTDKKYIIALDQGTTSSRAVLLDHNANVVEIAQREFTQIYPRAGWVEHNPMEIWATQSSTLNEVVAKAGITSDEIAAIGITNQRETTIVWEKSTGTPVYNAIVWQCRRTADITDKLKADGHEEYIRNTTGLVVDPYFSGTKVKWILDNVEGAREKAERGELLFGTVDTWLVWKLTQGRVHVTDYTNASRTMLFNIHTKQWDDKMLEILNIPRSMLPEVRNSSEIYGQTNIGGKGGVRIPVAGIAGDQQAALYGHLCVHAGQAKNTYGTGCFMLLHTGNKAITSKNGLLTTIACNAKGEPEYALEGSVFIAGASIQWLRDELKIVHDSFDSEYFAQKVTDSNGVYVVPAFTGLGAPYWDPYARGAIFGLSRGANRNHIVRATLESIAYQTRDVLEAMQSDSGERLQYLRVDGGATNNNFLMQFQADILDVNVERPVVKEVTALGAAYLAGLATGFWKDLDELRDKARVERTFSPDSDNEKRERRYKGWKKAVKRSLEWAKEDEE</sequence>
<comment type="function">
    <text evidence="2">Key enzyme in the regulation of glycerol uptake and metabolism. Catalyzes the phosphorylation of glycerol to yield sn-glycerol 3-phosphate.</text>
</comment>
<comment type="catalytic activity">
    <reaction evidence="2">
        <text>glycerol + ATP = sn-glycerol 3-phosphate + ADP + H(+)</text>
        <dbReference type="Rhea" id="RHEA:21644"/>
        <dbReference type="ChEBI" id="CHEBI:15378"/>
        <dbReference type="ChEBI" id="CHEBI:17754"/>
        <dbReference type="ChEBI" id="CHEBI:30616"/>
        <dbReference type="ChEBI" id="CHEBI:57597"/>
        <dbReference type="ChEBI" id="CHEBI:456216"/>
        <dbReference type="EC" id="2.7.1.30"/>
    </reaction>
</comment>
<comment type="activity regulation">
    <text evidence="2">Inhibited by fructose 1,6-bisphosphate (FBP).</text>
</comment>
<comment type="pathway">
    <text evidence="2">Polyol metabolism; glycerol degradation via glycerol kinase pathway; sn-glycerol 3-phosphate from glycerol: step 1/1.</text>
</comment>
<comment type="similarity">
    <text evidence="2">Belongs to the FGGY kinase family.</text>
</comment>
<name>GLPK_HAEIN</name>
<feature type="initiator methionine" description="Removed" evidence="1">
    <location>
        <position position="1"/>
    </location>
</feature>
<feature type="chain" id="PRO_0000059458" description="Glycerol kinase">
    <location>
        <begin position="2"/>
        <end position="503"/>
    </location>
</feature>
<feature type="region of interest" description="Disordered" evidence="3">
    <location>
        <begin position="468"/>
        <end position="489"/>
    </location>
</feature>
<feature type="compositionally biased region" description="Basic and acidic residues" evidence="3">
    <location>
        <begin position="468"/>
        <end position="481"/>
    </location>
</feature>
<feature type="binding site" evidence="2">
    <location>
        <position position="14"/>
    </location>
    <ligand>
        <name>ADP</name>
        <dbReference type="ChEBI" id="CHEBI:456216"/>
    </ligand>
</feature>
<feature type="binding site" evidence="2">
    <location>
        <position position="14"/>
    </location>
    <ligand>
        <name>ATP</name>
        <dbReference type="ChEBI" id="CHEBI:30616"/>
    </ligand>
</feature>
<feature type="binding site" evidence="2">
    <location>
        <position position="14"/>
    </location>
    <ligand>
        <name>sn-glycerol 3-phosphate</name>
        <dbReference type="ChEBI" id="CHEBI:57597"/>
    </ligand>
</feature>
<feature type="binding site" evidence="2">
    <location>
        <position position="15"/>
    </location>
    <ligand>
        <name>ATP</name>
        <dbReference type="ChEBI" id="CHEBI:30616"/>
    </ligand>
</feature>
<feature type="binding site" evidence="2">
    <location>
        <position position="16"/>
    </location>
    <ligand>
        <name>ATP</name>
        <dbReference type="ChEBI" id="CHEBI:30616"/>
    </ligand>
</feature>
<feature type="binding site" evidence="2">
    <location>
        <position position="18"/>
    </location>
    <ligand>
        <name>ADP</name>
        <dbReference type="ChEBI" id="CHEBI:456216"/>
    </ligand>
</feature>
<feature type="binding site" evidence="2">
    <location>
        <position position="84"/>
    </location>
    <ligand>
        <name>glycerol</name>
        <dbReference type="ChEBI" id="CHEBI:17754"/>
    </ligand>
</feature>
<feature type="binding site" evidence="2">
    <location>
        <position position="84"/>
    </location>
    <ligand>
        <name>sn-glycerol 3-phosphate</name>
        <dbReference type="ChEBI" id="CHEBI:57597"/>
    </ligand>
</feature>
<feature type="binding site" evidence="2">
    <location>
        <position position="85"/>
    </location>
    <ligand>
        <name>glycerol</name>
        <dbReference type="ChEBI" id="CHEBI:17754"/>
    </ligand>
</feature>
<feature type="binding site" evidence="2">
    <location>
        <position position="85"/>
    </location>
    <ligand>
        <name>sn-glycerol 3-phosphate</name>
        <dbReference type="ChEBI" id="CHEBI:57597"/>
    </ligand>
</feature>
<feature type="binding site" evidence="2">
    <location>
        <position position="136"/>
    </location>
    <ligand>
        <name>glycerol</name>
        <dbReference type="ChEBI" id="CHEBI:17754"/>
    </ligand>
</feature>
<feature type="binding site" evidence="2">
    <location>
        <position position="136"/>
    </location>
    <ligand>
        <name>sn-glycerol 3-phosphate</name>
        <dbReference type="ChEBI" id="CHEBI:57597"/>
    </ligand>
</feature>
<feature type="binding site" evidence="2">
    <location>
        <position position="246"/>
    </location>
    <ligand>
        <name>glycerol</name>
        <dbReference type="ChEBI" id="CHEBI:17754"/>
    </ligand>
</feature>
<feature type="binding site" evidence="2">
    <location>
        <position position="246"/>
    </location>
    <ligand>
        <name>sn-glycerol 3-phosphate</name>
        <dbReference type="ChEBI" id="CHEBI:57597"/>
    </ligand>
</feature>
<feature type="binding site" evidence="2">
    <location>
        <position position="247"/>
    </location>
    <ligand>
        <name>glycerol</name>
        <dbReference type="ChEBI" id="CHEBI:17754"/>
    </ligand>
</feature>
<feature type="binding site" evidence="2">
    <location>
        <position position="268"/>
    </location>
    <ligand>
        <name>ADP</name>
        <dbReference type="ChEBI" id="CHEBI:456216"/>
    </ligand>
</feature>
<feature type="binding site" evidence="2">
    <location>
        <position position="268"/>
    </location>
    <ligand>
        <name>ATP</name>
        <dbReference type="ChEBI" id="CHEBI:30616"/>
    </ligand>
</feature>
<feature type="binding site" evidence="2">
    <location>
        <position position="311"/>
    </location>
    <ligand>
        <name>ADP</name>
        <dbReference type="ChEBI" id="CHEBI:456216"/>
    </ligand>
</feature>
<feature type="binding site" evidence="2">
    <location>
        <position position="311"/>
    </location>
    <ligand>
        <name>ATP</name>
        <dbReference type="ChEBI" id="CHEBI:30616"/>
    </ligand>
</feature>
<feature type="binding site" evidence="2">
    <location>
        <position position="315"/>
    </location>
    <ligand>
        <name>ATP</name>
        <dbReference type="ChEBI" id="CHEBI:30616"/>
    </ligand>
</feature>
<feature type="binding site" evidence="2">
    <location>
        <position position="412"/>
    </location>
    <ligand>
        <name>ADP</name>
        <dbReference type="ChEBI" id="CHEBI:456216"/>
    </ligand>
</feature>
<feature type="binding site" evidence="2">
    <location>
        <position position="412"/>
    </location>
    <ligand>
        <name>ATP</name>
        <dbReference type="ChEBI" id="CHEBI:30616"/>
    </ligand>
</feature>
<feature type="binding site" evidence="2">
    <location>
        <position position="416"/>
    </location>
    <ligand>
        <name>ADP</name>
        <dbReference type="ChEBI" id="CHEBI:456216"/>
    </ligand>
</feature>
<organism>
    <name type="scientific">Haemophilus influenzae (strain ATCC 51907 / DSM 11121 / KW20 / Rd)</name>
    <dbReference type="NCBI Taxonomy" id="71421"/>
    <lineage>
        <taxon>Bacteria</taxon>
        <taxon>Pseudomonadati</taxon>
        <taxon>Pseudomonadota</taxon>
        <taxon>Gammaproteobacteria</taxon>
        <taxon>Pasteurellales</taxon>
        <taxon>Pasteurellaceae</taxon>
        <taxon>Haemophilus</taxon>
    </lineage>
</organism>
<proteinExistence type="inferred from homology"/>
<keyword id="KW-0067">ATP-binding</keyword>
<keyword id="KW-0319">Glycerol metabolism</keyword>
<keyword id="KW-0418">Kinase</keyword>
<keyword id="KW-0547">Nucleotide-binding</keyword>
<keyword id="KW-1185">Reference proteome</keyword>
<keyword id="KW-0808">Transferase</keyword>
<accession>P44400</accession>
<evidence type="ECO:0000250" key="1"/>
<evidence type="ECO:0000255" key="2">
    <source>
        <dbReference type="HAMAP-Rule" id="MF_00186"/>
    </source>
</evidence>
<evidence type="ECO:0000256" key="3">
    <source>
        <dbReference type="SAM" id="MobiDB-lite"/>
    </source>
</evidence>
<gene>
    <name evidence="2" type="primary">glpK</name>
    <name type="ordered locus">HI_0691</name>
</gene>
<dbReference type="EC" id="2.7.1.30" evidence="2"/>
<dbReference type="EMBL" id="L42023">
    <property type="protein sequence ID" value="AAC22351.1"/>
    <property type="molecule type" value="Genomic_DNA"/>
</dbReference>
<dbReference type="PIR" id="I64086">
    <property type="entry name" value="I64086"/>
</dbReference>
<dbReference type="RefSeq" id="NP_438851.1">
    <property type="nucleotide sequence ID" value="NC_000907.1"/>
</dbReference>
<dbReference type="SMR" id="P44400"/>
<dbReference type="STRING" id="71421.HI_0691"/>
<dbReference type="EnsemblBacteria" id="AAC22351">
    <property type="protein sequence ID" value="AAC22351"/>
    <property type="gene ID" value="HI_0691"/>
</dbReference>
<dbReference type="KEGG" id="hin:HI_0691"/>
<dbReference type="PATRIC" id="fig|71421.8.peg.722"/>
<dbReference type="eggNOG" id="COG0554">
    <property type="taxonomic scope" value="Bacteria"/>
</dbReference>
<dbReference type="HOGENOM" id="CLU_009281_2_3_6"/>
<dbReference type="OrthoDB" id="9805576at2"/>
<dbReference type="PhylomeDB" id="P44400"/>
<dbReference type="BioCyc" id="HINF71421:G1GJ1-726-MONOMER"/>
<dbReference type="UniPathway" id="UPA00618">
    <property type="reaction ID" value="UER00672"/>
</dbReference>
<dbReference type="Proteomes" id="UP000000579">
    <property type="component" value="Chromosome"/>
</dbReference>
<dbReference type="GO" id="GO:0005829">
    <property type="term" value="C:cytosol"/>
    <property type="evidence" value="ECO:0000318"/>
    <property type="project" value="GO_Central"/>
</dbReference>
<dbReference type="GO" id="GO:0005524">
    <property type="term" value="F:ATP binding"/>
    <property type="evidence" value="ECO:0007669"/>
    <property type="project" value="UniProtKB-UniRule"/>
</dbReference>
<dbReference type="GO" id="GO:0004370">
    <property type="term" value="F:glycerol kinase activity"/>
    <property type="evidence" value="ECO:0000250"/>
    <property type="project" value="UniProtKB"/>
</dbReference>
<dbReference type="GO" id="GO:0019563">
    <property type="term" value="P:glycerol catabolic process"/>
    <property type="evidence" value="ECO:0000318"/>
    <property type="project" value="GO_Central"/>
</dbReference>
<dbReference type="GO" id="GO:0006071">
    <property type="term" value="P:glycerol metabolic process"/>
    <property type="evidence" value="ECO:0000250"/>
    <property type="project" value="UniProtKB"/>
</dbReference>
<dbReference type="GO" id="GO:0006072">
    <property type="term" value="P:glycerol-3-phosphate metabolic process"/>
    <property type="evidence" value="ECO:0007669"/>
    <property type="project" value="InterPro"/>
</dbReference>
<dbReference type="CDD" id="cd07786">
    <property type="entry name" value="FGGY_EcGK_like"/>
    <property type="match status" value="1"/>
</dbReference>
<dbReference type="FunFam" id="3.30.420.40:FF:000007">
    <property type="entry name" value="Glycerol kinase"/>
    <property type="match status" value="1"/>
</dbReference>
<dbReference type="FunFam" id="3.30.420.40:FF:000008">
    <property type="entry name" value="Glycerol kinase"/>
    <property type="match status" value="1"/>
</dbReference>
<dbReference type="Gene3D" id="3.30.420.40">
    <property type="match status" value="2"/>
</dbReference>
<dbReference type="HAMAP" id="MF_00186">
    <property type="entry name" value="Glycerol_kin"/>
    <property type="match status" value="1"/>
</dbReference>
<dbReference type="InterPro" id="IPR043129">
    <property type="entry name" value="ATPase_NBD"/>
</dbReference>
<dbReference type="InterPro" id="IPR000577">
    <property type="entry name" value="Carb_kinase_FGGY"/>
</dbReference>
<dbReference type="InterPro" id="IPR018483">
    <property type="entry name" value="Carb_kinase_FGGY_CS"/>
</dbReference>
<dbReference type="InterPro" id="IPR018485">
    <property type="entry name" value="FGGY_C"/>
</dbReference>
<dbReference type="InterPro" id="IPR018484">
    <property type="entry name" value="FGGY_N"/>
</dbReference>
<dbReference type="InterPro" id="IPR005999">
    <property type="entry name" value="Glycerol_kin"/>
</dbReference>
<dbReference type="NCBIfam" id="TIGR01311">
    <property type="entry name" value="glycerol_kin"/>
    <property type="match status" value="1"/>
</dbReference>
<dbReference type="NCBIfam" id="NF000756">
    <property type="entry name" value="PRK00047.1"/>
    <property type="match status" value="1"/>
</dbReference>
<dbReference type="PANTHER" id="PTHR10196:SF69">
    <property type="entry name" value="GLYCEROL KINASE"/>
    <property type="match status" value="1"/>
</dbReference>
<dbReference type="PANTHER" id="PTHR10196">
    <property type="entry name" value="SUGAR KINASE"/>
    <property type="match status" value="1"/>
</dbReference>
<dbReference type="Pfam" id="PF02782">
    <property type="entry name" value="FGGY_C"/>
    <property type="match status" value="1"/>
</dbReference>
<dbReference type="Pfam" id="PF00370">
    <property type="entry name" value="FGGY_N"/>
    <property type="match status" value="1"/>
</dbReference>
<dbReference type="PIRSF" id="PIRSF000538">
    <property type="entry name" value="GlpK"/>
    <property type="match status" value="1"/>
</dbReference>
<dbReference type="SUPFAM" id="SSF53067">
    <property type="entry name" value="Actin-like ATPase domain"/>
    <property type="match status" value="2"/>
</dbReference>
<dbReference type="PROSITE" id="PS00933">
    <property type="entry name" value="FGGY_KINASES_1"/>
    <property type="match status" value="1"/>
</dbReference>
<dbReference type="PROSITE" id="PS00445">
    <property type="entry name" value="FGGY_KINASES_2"/>
    <property type="match status" value="1"/>
</dbReference>
<protein>
    <recommendedName>
        <fullName evidence="2">Glycerol kinase</fullName>
        <ecNumber evidence="2">2.7.1.30</ecNumber>
    </recommendedName>
    <alternativeName>
        <fullName evidence="2">ATP:glycerol 3-phosphotransferase</fullName>
    </alternativeName>
    <alternativeName>
        <fullName evidence="2">Glycerokinase</fullName>
        <shortName evidence="2">GK</shortName>
    </alternativeName>
</protein>
<reference key="1">
    <citation type="journal article" date="1995" name="Science">
        <title>Whole-genome random sequencing and assembly of Haemophilus influenzae Rd.</title>
        <authorList>
            <person name="Fleischmann R.D."/>
            <person name="Adams M.D."/>
            <person name="White O."/>
            <person name="Clayton R.A."/>
            <person name="Kirkness E.F."/>
            <person name="Kerlavage A.R."/>
            <person name="Bult C.J."/>
            <person name="Tomb J.-F."/>
            <person name="Dougherty B.A."/>
            <person name="Merrick J.M."/>
            <person name="McKenney K."/>
            <person name="Sutton G.G."/>
            <person name="FitzHugh W."/>
            <person name="Fields C.A."/>
            <person name="Gocayne J.D."/>
            <person name="Scott J.D."/>
            <person name="Shirley R."/>
            <person name="Liu L.-I."/>
            <person name="Glodek A."/>
            <person name="Kelley J.M."/>
            <person name="Weidman J.F."/>
            <person name="Phillips C.A."/>
            <person name="Spriggs T."/>
            <person name="Hedblom E."/>
            <person name="Cotton M.D."/>
            <person name="Utterback T.R."/>
            <person name="Hanna M.C."/>
            <person name="Nguyen D.T."/>
            <person name="Saudek D.M."/>
            <person name="Brandon R.C."/>
            <person name="Fine L.D."/>
            <person name="Fritchman J.L."/>
            <person name="Fuhrmann J.L."/>
            <person name="Geoghagen N.S.M."/>
            <person name="Gnehm C.L."/>
            <person name="McDonald L.A."/>
            <person name="Small K.V."/>
            <person name="Fraser C.M."/>
            <person name="Smith H.O."/>
            <person name="Venter J.C."/>
        </authorList>
    </citation>
    <scope>NUCLEOTIDE SEQUENCE [LARGE SCALE GENOMIC DNA]</scope>
    <source>
        <strain>ATCC 51907 / DSM 11121 / KW20 / Rd</strain>
    </source>
</reference>